<protein>
    <recommendedName>
        <fullName>Putative lipase ATG15</fullName>
        <ecNumber>3.1.1.3</ecNumber>
    </recommendedName>
    <alternativeName>
        <fullName>Autophagy-related protein 15</fullName>
    </alternativeName>
</protein>
<comment type="function">
    <text evidence="1">Lipase which is essential for lysis of subvacuolar cytoplasm to vacuole targeted bodies and intravacuolar autophagic bodies. Involved in the lysis of intravacuolar multivesicular body (MVB) vesicles. The intravacuolar membrane disintegration by ATG15 is critical to life span extension (By similarity).</text>
</comment>
<comment type="catalytic activity">
    <reaction>
        <text>a triacylglycerol + H2O = a diacylglycerol + a fatty acid + H(+)</text>
        <dbReference type="Rhea" id="RHEA:12044"/>
        <dbReference type="ChEBI" id="CHEBI:15377"/>
        <dbReference type="ChEBI" id="CHEBI:15378"/>
        <dbReference type="ChEBI" id="CHEBI:17855"/>
        <dbReference type="ChEBI" id="CHEBI:18035"/>
        <dbReference type="ChEBI" id="CHEBI:28868"/>
        <dbReference type="EC" id="3.1.1.3"/>
    </reaction>
</comment>
<comment type="subunit">
    <text evidence="1">Binds to both phosphatidylinositol (PI) and phosphatidylinositol 3,5-bisphosphate (PIP2).</text>
</comment>
<comment type="subcellular location">
    <subcellularLocation>
        <location evidence="2">Endosome</location>
        <location evidence="2">Multivesicular body membrane</location>
        <topology evidence="2">Single-pass type II membrane protein</topology>
    </subcellularLocation>
    <subcellularLocation>
        <location evidence="2">Prevacuolar compartment membrane</location>
        <topology evidence="2">Single-pass type II membrane protein</topology>
    </subcellularLocation>
    <text evidence="2">From ER, targeted to vacuolar lumen at the MVB vesicles via the Golgi and the prevacuolar compartment (PVC).</text>
</comment>
<comment type="similarity">
    <text evidence="5">Belongs to the AB hydrolase superfamily. Lipase family.</text>
</comment>
<reference key="1">
    <citation type="journal article" date="2009" name="Nature">
        <title>Evolution of pathogenicity and sexual reproduction in eight Candida genomes.</title>
        <authorList>
            <person name="Butler G."/>
            <person name="Rasmussen M.D."/>
            <person name="Lin M.F."/>
            <person name="Santos M.A.S."/>
            <person name="Sakthikumar S."/>
            <person name="Munro C.A."/>
            <person name="Rheinbay E."/>
            <person name="Grabherr M."/>
            <person name="Forche A."/>
            <person name="Reedy J.L."/>
            <person name="Agrafioti I."/>
            <person name="Arnaud M.B."/>
            <person name="Bates S."/>
            <person name="Brown A.J.P."/>
            <person name="Brunke S."/>
            <person name="Costanzo M.C."/>
            <person name="Fitzpatrick D.A."/>
            <person name="de Groot P.W.J."/>
            <person name="Harris D."/>
            <person name="Hoyer L.L."/>
            <person name="Hube B."/>
            <person name="Klis F.M."/>
            <person name="Kodira C."/>
            <person name="Lennard N."/>
            <person name="Logue M.E."/>
            <person name="Martin R."/>
            <person name="Neiman A.M."/>
            <person name="Nikolaou E."/>
            <person name="Quail M.A."/>
            <person name="Quinn J."/>
            <person name="Santos M.C."/>
            <person name="Schmitzberger F.F."/>
            <person name="Sherlock G."/>
            <person name="Shah P."/>
            <person name="Silverstein K.A.T."/>
            <person name="Skrzypek M.S."/>
            <person name="Soll D."/>
            <person name="Staggs R."/>
            <person name="Stansfield I."/>
            <person name="Stumpf M.P.H."/>
            <person name="Sudbery P.E."/>
            <person name="Srikantha T."/>
            <person name="Zeng Q."/>
            <person name="Berman J."/>
            <person name="Berriman M."/>
            <person name="Heitman J."/>
            <person name="Gow N.A.R."/>
            <person name="Lorenz M.C."/>
            <person name="Birren B.W."/>
            <person name="Kellis M."/>
            <person name="Cuomo C.A."/>
        </authorList>
    </citation>
    <scope>NUCLEOTIDE SEQUENCE [LARGE SCALE GENOMIC DNA]</scope>
    <source>
        <strain>ATCC 11503 / BCRC 21390 / CBS 2605 / JCM 1781 / NBRC 1676 / NRRL YB-4239</strain>
    </source>
</reference>
<evidence type="ECO:0000250" key="1"/>
<evidence type="ECO:0000250" key="2">
    <source>
        <dbReference type="UniProtKB" id="P25641"/>
    </source>
</evidence>
<evidence type="ECO:0000255" key="3"/>
<evidence type="ECO:0000255" key="4">
    <source>
        <dbReference type="PROSITE-ProRule" id="PRU10037"/>
    </source>
</evidence>
<evidence type="ECO:0000305" key="5"/>
<accession>A5E567</accession>
<keyword id="KW-0072">Autophagy</keyword>
<keyword id="KW-0967">Endosome</keyword>
<keyword id="KW-0325">Glycoprotein</keyword>
<keyword id="KW-0378">Hydrolase</keyword>
<keyword id="KW-0442">Lipid degradation</keyword>
<keyword id="KW-0443">Lipid metabolism</keyword>
<keyword id="KW-0472">Membrane</keyword>
<keyword id="KW-1185">Reference proteome</keyword>
<keyword id="KW-0735">Signal-anchor</keyword>
<keyword id="KW-0812">Transmembrane</keyword>
<keyword id="KW-1133">Transmembrane helix</keyword>
<dbReference type="EC" id="3.1.1.3"/>
<dbReference type="EMBL" id="CH981530">
    <property type="protein sequence ID" value="EDK46575.1"/>
    <property type="molecule type" value="Genomic_DNA"/>
</dbReference>
<dbReference type="RefSeq" id="XP_001523943.1">
    <property type="nucleotide sequence ID" value="XM_001523893.1"/>
</dbReference>
<dbReference type="FunCoup" id="A5E567">
    <property type="interactions" value="59"/>
</dbReference>
<dbReference type="STRING" id="379508.A5E567"/>
<dbReference type="ESTHER" id="lodel-atg15">
    <property type="family name" value="ATG15-related-lipase"/>
</dbReference>
<dbReference type="GlyCosmos" id="A5E567">
    <property type="glycosylation" value="6 sites, No reported glycans"/>
</dbReference>
<dbReference type="GeneID" id="5231224"/>
<dbReference type="KEGG" id="lel:PVL30_005489"/>
<dbReference type="VEuPathDB" id="FungiDB:LELG_04756"/>
<dbReference type="eggNOG" id="KOG4540">
    <property type="taxonomic scope" value="Eukaryota"/>
</dbReference>
<dbReference type="HOGENOM" id="CLU_028295_0_2_1"/>
<dbReference type="InParanoid" id="A5E567"/>
<dbReference type="OMA" id="TYHFGHT"/>
<dbReference type="OrthoDB" id="58570at2759"/>
<dbReference type="Proteomes" id="UP000001996">
    <property type="component" value="Unassembled WGS sequence"/>
</dbReference>
<dbReference type="GO" id="GO:0032585">
    <property type="term" value="C:multivesicular body membrane"/>
    <property type="evidence" value="ECO:0007669"/>
    <property type="project" value="UniProtKB-SubCell"/>
</dbReference>
<dbReference type="GO" id="GO:0005775">
    <property type="term" value="C:vacuolar lumen"/>
    <property type="evidence" value="ECO:0007669"/>
    <property type="project" value="TreeGrafter"/>
</dbReference>
<dbReference type="GO" id="GO:0004620">
    <property type="term" value="F:phospholipase activity"/>
    <property type="evidence" value="ECO:0007669"/>
    <property type="project" value="TreeGrafter"/>
</dbReference>
<dbReference type="GO" id="GO:0004806">
    <property type="term" value="F:triacylglycerol lipase activity"/>
    <property type="evidence" value="ECO:0007669"/>
    <property type="project" value="UniProtKB-EC"/>
</dbReference>
<dbReference type="GO" id="GO:0034496">
    <property type="term" value="P:multivesicular body membrane disassembly"/>
    <property type="evidence" value="ECO:0007669"/>
    <property type="project" value="TreeGrafter"/>
</dbReference>
<dbReference type="GO" id="GO:0046461">
    <property type="term" value="P:neutral lipid catabolic process"/>
    <property type="evidence" value="ECO:0007669"/>
    <property type="project" value="TreeGrafter"/>
</dbReference>
<dbReference type="GO" id="GO:0006660">
    <property type="term" value="P:phosphatidylserine catabolic process"/>
    <property type="evidence" value="ECO:0007669"/>
    <property type="project" value="TreeGrafter"/>
</dbReference>
<dbReference type="GO" id="GO:0034727">
    <property type="term" value="P:piecemeal microautophagy of the nucleus"/>
    <property type="evidence" value="ECO:0007669"/>
    <property type="project" value="TreeGrafter"/>
</dbReference>
<dbReference type="CDD" id="cd00519">
    <property type="entry name" value="Lipase_3"/>
    <property type="match status" value="1"/>
</dbReference>
<dbReference type="Gene3D" id="3.40.50.1820">
    <property type="entry name" value="alpha/beta hydrolase"/>
    <property type="match status" value="1"/>
</dbReference>
<dbReference type="InterPro" id="IPR029058">
    <property type="entry name" value="AB_hydrolase_fold"/>
</dbReference>
<dbReference type="InterPro" id="IPR050805">
    <property type="entry name" value="ATG15_Lipase"/>
</dbReference>
<dbReference type="InterPro" id="IPR002921">
    <property type="entry name" value="Fungal_lipase-type"/>
</dbReference>
<dbReference type="PANTHER" id="PTHR47175">
    <property type="entry name" value="LIPASE ATG15-RELATED"/>
    <property type="match status" value="1"/>
</dbReference>
<dbReference type="PANTHER" id="PTHR47175:SF2">
    <property type="entry name" value="LIPASE ATG15-RELATED"/>
    <property type="match status" value="1"/>
</dbReference>
<dbReference type="Pfam" id="PF01764">
    <property type="entry name" value="Lipase_3"/>
    <property type="match status" value="1"/>
</dbReference>
<dbReference type="SUPFAM" id="SSF53474">
    <property type="entry name" value="alpha/beta-Hydrolases"/>
    <property type="match status" value="1"/>
</dbReference>
<dbReference type="PROSITE" id="PS00120">
    <property type="entry name" value="LIPASE_SER"/>
    <property type="match status" value="1"/>
</dbReference>
<name>ATG15_LODEL</name>
<proteinExistence type="inferred from homology"/>
<organism>
    <name type="scientific">Lodderomyces elongisporus (strain ATCC 11503 / CBS 2605 / JCM 1781 / NBRC 1676 / NRRL YB-4239)</name>
    <name type="common">Yeast</name>
    <name type="synonym">Saccharomyces elongisporus</name>
    <dbReference type="NCBI Taxonomy" id="379508"/>
    <lineage>
        <taxon>Eukaryota</taxon>
        <taxon>Fungi</taxon>
        <taxon>Dikarya</taxon>
        <taxon>Ascomycota</taxon>
        <taxon>Saccharomycotina</taxon>
        <taxon>Pichiomycetes</taxon>
        <taxon>Debaryomycetaceae</taxon>
        <taxon>Candida/Lodderomyces clade</taxon>
        <taxon>Lodderomyces</taxon>
    </lineage>
</organism>
<gene>
    <name type="primary">ATG15</name>
    <name type="ORF">LELG_04756</name>
</gene>
<feature type="chain" id="PRO_0000317964" description="Putative lipase ATG15">
    <location>
        <begin position="1"/>
        <end position="552"/>
    </location>
</feature>
<feature type="topological domain" description="Cytoplasmic" evidence="1">
    <location>
        <begin position="1"/>
        <end position="26"/>
    </location>
</feature>
<feature type="transmembrane region" description="Helical; Signal-anchor for type II membrane protein">
    <location>
        <begin position="27"/>
        <end position="49"/>
    </location>
</feature>
<feature type="topological domain" description="Lumenal" evidence="1">
    <location>
        <begin position="50"/>
        <end position="552"/>
    </location>
</feature>
<feature type="active site" description="Charge relay system" evidence="4">
    <location>
        <position position="409"/>
    </location>
</feature>
<feature type="glycosylation site" description="N-linked (GlcNAc...) asparagine" evidence="3">
    <location>
        <position position="63"/>
    </location>
</feature>
<feature type="glycosylation site" description="N-linked (GlcNAc...) asparagine" evidence="3">
    <location>
        <position position="147"/>
    </location>
</feature>
<feature type="glycosylation site" description="N-linked (GlcNAc...) asparagine" evidence="3">
    <location>
        <position position="239"/>
    </location>
</feature>
<feature type="glycosylation site" description="N-linked (GlcNAc...) asparagine" evidence="3">
    <location>
        <position position="307"/>
    </location>
</feature>
<feature type="glycosylation site" description="N-linked (GlcNAc...) asparagine" evidence="3">
    <location>
        <position position="391"/>
    </location>
</feature>
<feature type="glycosylation site" description="N-linked (GlcNAc...) asparagine" evidence="3">
    <location>
        <position position="526"/>
    </location>
</feature>
<sequence>MLHITEKEQTRGLRQLEKRGKRLLPPLIKFIWFCLISAACVAATTFYWLRLSPVHNIHKHSLNSSFEDKGEDGTLQLKHIFHHGVGEKDYKIHKRLDVTQEYLIKHSAYFQNMVNEQQQEVQEIQEIHKRHEKQEIQVKYGPDQEYNQTNTALNSVGTEYKSRLSTNEYDWPDVHRGKNPFDIQLPFKNKQSIARRIKHRNEPFFIESYLDYARSVNGDALILNRINLEWIDDDINIPNITDKDTIVTLATISSNAYVRFPQNDDDKKKSDWTDVGGGWIPDEENNDVNFGWEDVGLRGHIFVSKDNKTVVIGIKGTSGAGLPGGGSDETTKNDKTNDNLLFSCCCARVGYMWTTVCDCYEKAYTCNQDCLEKELRRKDRYYEAALDIYKNVTAIYPPETTDIWVTGHSLGGALASLLGRTYGLPTVAYEAPGEMLALKRLHLPQAPGLPRHLEHIWHIGNTADPIYMGVCNGASSSCSLGGYAMETACHTGYQCVYDVVTDYGWRVNLLNHRIHTVIDDIILVYNETAPCVYQAPCRDCFNWRFVSHDDKE</sequence>